<evidence type="ECO:0000250" key="1">
    <source>
        <dbReference type="UniProtKB" id="P16885"/>
    </source>
</evidence>
<evidence type="ECO:0000250" key="2">
    <source>
        <dbReference type="UniProtKB" id="Q8CIH5"/>
    </source>
</evidence>
<evidence type="ECO:0000255" key="3">
    <source>
        <dbReference type="PROSITE-ProRule" id="PRU00041"/>
    </source>
</evidence>
<evidence type="ECO:0000255" key="4">
    <source>
        <dbReference type="PROSITE-ProRule" id="PRU00145"/>
    </source>
</evidence>
<evidence type="ECO:0000255" key="5">
    <source>
        <dbReference type="PROSITE-ProRule" id="PRU00191"/>
    </source>
</evidence>
<evidence type="ECO:0000255" key="6">
    <source>
        <dbReference type="PROSITE-ProRule" id="PRU00192"/>
    </source>
</evidence>
<evidence type="ECO:0000255" key="7">
    <source>
        <dbReference type="PROSITE-ProRule" id="PRU00270"/>
    </source>
</evidence>
<evidence type="ECO:0000255" key="8">
    <source>
        <dbReference type="PROSITE-ProRule" id="PRU00271"/>
    </source>
</evidence>
<evidence type="ECO:0000269" key="9">
    <source>
    </source>
</evidence>
<evidence type="ECO:0000305" key="10"/>
<evidence type="ECO:0000312" key="11">
    <source>
        <dbReference type="RGD" id="3348"/>
    </source>
</evidence>
<evidence type="ECO:0007829" key="12">
    <source>
        <dbReference type="PDB" id="2EOB"/>
    </source>
</evidence>
<protein>
    <recommendedName>
        <fullName evidence="10">1-phosphatidylinositol 4,5-bisphosphate phosphodiesterase gamma-2</fullName>
        <ecNumber evidence="1">3.1.4.11</ecNumber>
    </recommendedName>
    <alternativeName>
        <fullName>Phosphoinositide phospholipase C-gamma-2</fullName>
    </alternativeName>
    <alternativeName>
        <fullName>Phospholipase C-IV</fullName>
        <shortName>PLC-IV</shortName>
    </alternativeName>
    <alternativeName>
        <fullName>Phospholipase C-gamma-2</fullName>
        <shortName>PLC-gamma-2</shortName>
    </alternativeName>
</protein>
<dbReference type="EC" id="3.1.4.11" evidence="1"/>
<dbReference type="EMBL" id="J05155">
    <property type="protein sequence ID" value="AAA41896.1"/>
    <property type="molecule type" value="mRNA"/>
</dbReference>
<dbReference type="PIR" id="A34163">
    <property type="entry name" value="A34163"/>
</dbReference>
<dbReference type="RefSeq" id="NP_058864.1">
    <property type="nucleotide sequence ID" value="NM_017168.1"/>
</dbReference>
<dbReference type="PDB" id="2EOB">
    <property type="method" value="NMR"/>
    <property type="chains" value="A=633-743"/>
</dbReference>
<dbReference type="PDBsum" id="2EOB"/>
<dbReference type="BMRB" id="P24135"/>
<dbReference type="SMR" id="P24135"/>
<dbReference type="FunCoup" id="P24135">
    <property type="interactions" value="1333"/>
</dbReference>
<dbReference type="IntAct" id="P24135">
    <property type="interactions" value="5"/>
</dbReference>
<dbReference type="STRING" id="10116.ENSRNOP00000069801"/>
<dbReference type="ChEMBL" id="CHEMBL5230"/>
<dbReference type="iPTMnet" id="P24135"/>
<dbReference type="PhosphoSitePlus" id="P24135"/>
<dbReference type="PaxDb" id="10116-ENSRNOP00000018678"/>
<dbReference type="GeneID" id="29337"/>
<dbReference type="KEGG" id="rno:29337"/>
<dbReference type="UCSC" id="RGD:3348">
    <property type="organism name" value="rat"/>
</dbReference>
<dbReference type="AGR" id="RGD:3348"/>
<dbReference type="CTD" id="5336"/>
<dbReference type="RGD" id="3348">
    <property type="gene designation" value="Plcg2"/>
</dbReference>
<dbReference type="eggNOG" id="KOG1264">
    <property type="taxonomic scope" value="Eukaryota"/>
</dbReference>
<dbReference type="InParanoid" id="P24135"/>
<dbReference type="OrthoDB" id="9575at9989"/>
<dbReference type="PhylomeDB" id="P24135"/>
<dbReference type="Reactome" id="R-RNO-114604">
    <property type="pathway name" value="GPVI-mediated activation cascade"/>
</dbReference>
<dbReference type="Reactome" id="R-RNO-166016">
    <property type="pathway name" value="Toll Like Receptor 4 (TLR4) Cascade"/>
</dbReference>
<dbReference type="Reactome" id="R-RNO-1855204">
    <property type="pathway name" value="Synthesis of IP3 and IP4 in the cytosol"/>
</dbReference>
<dbReference type="Reactome" id="R-RNO-202433">
    <property type="pathway name" value="Generation of second messenger molecules"/>
</dbReference>
<dbReference type="Reactome" id="R-RNO-2029485">
    <property type="pathway name" value="Role of phospholipids in phagocytosis"/>
</dbReference>
<dbReference type="Reactome" id="R-RNO-2424491">
    <property type="pathway name" value="DAP12 signaling"/>
</dbReference>
<dbReference type="Reactome" id="R-RNO-2871796">
    <property type="pathway name" value="FCERI mediated MAPK activation"/>
</dbReference>
<dbReference type="Reactome" id="R-RNO-2871809">
    <property type="pathway name" value="FCERI mediated Ca+2 mobilization"/>
</dbReference>
<dbReference type="Reactome" id="R-RNO-5607764">
    <property type="pathway name" value="CLEC7A (Dectin-1) signaling"/>
</dbReference>
<dbReference type="Reactome" id="R-RNO-5621480">
    <property type="pathway name" value="Dectin-2 family"/>
</dbReference>
<dbReference type="Reactome" id="R-RNO-983695">
    <property type="pathway name" value="Antigen activates B Cell Receptor (BCR) leading to generation of second messengers"/>
</dbReference>
<dbReference type="EvolutionaryTrace" id="P24135"/>
<dbReference type="PRO" id="PR:P24135"/>
<dbReference type="Proteomes" id="UP000002494">
    <property type="component" value="Unplaced"/>
</dbReference>
<dbReference type="GO" id="GO:0005737">
    <property type="term" value="C:cytoplasm"/>
    <property type="evidence" value="ECO:0000266"/>
    <property type="project" value="RGD"/>
</dbReference>
<dbReference type="GO" id="GO:0005829">
    <property type="term" value="C:cytosol"/>
    <property type="evidence" value="ECO:0000266"/>
    <property type="project" value="RGD"/>
</dbReference>
<dbReference type="GO" id="GO:0097708">
    <property type="term" value="C:intracellular vesicle"/>
    <property type="evidence" value="ECO:0000266"/>
    <property type="project" value="RGD"/>
</dbReference>
<dbReference type="GO" id="GO:0045121">
    <property type="term" value="C:membrane raft"/>
    <property type="evidence" value="ECO:0000250"/>
    <property type="project" value="UniProtKB"/>
</dbReference>
<dbReference type="GO" id="GO:0048471">
    <property type="term" value="C:perinuclear region of cytoplasm"/>
    <property type="evidence" value="ECO:0000266"/>
    <property type="project" value="RGD"/>
</dbReference>
<dbReference type="GO" id="GO:0005886">
    <property type="term" value="C:plasma membrane"/>
    <property type="evidence" value="ECO:0000250"/>
    <property type="project" value="UniProtKB"/>
</dbReference>
<dbReference type="GO" id="GO:0032587">
    <property type="term" value="C:ruffle membrane"/>
    <property type="evidence" value="ECO:0000266"/>
    <property type="project" value="RGD"/>
</dbReference>
<dbReference type="GO" id="GO:0004435">
    <property type="term" value="F:phosphatidylinositol-4,5-bisphosphate phospholipase C activity"/>
    <property type="evidence" value="ECO:0000314"/>
    <property type="project" value="RGD"/>
</dbReference>
<dbReference type="GO" id="GO:0140031">
    <property type="term" value="F:phosphorylation-dependent protein binding"/>
    <property type="evidence" value="ECO:0000266"/>
    <property type="project" value="RGD"/>
</dbReference>
<dbReference type="GO" id="GO:0001784">
    <property type="term" value="F:phosphotyrosine residue binding"/>
    <property type="evidence" value="ECO:0000266"/>
    <property type="project" value="RGD"/>
</dbReference>
<dbReference type="GO" id="GO:0019901">
    <property type="term" value="F:protein kinase binding"/>
    <property type="evidence" value="ECO:0000266"/>
    <property type="project" value="RGD"/>
</dbReference>
<dbReference type="GO" id="GO:1990782">
    <property type="term" value="F:protein tyrosine kinase binding"/>
    <property type="evidence" value="ECO:0000266"/>
    <property type="project" value="RGD"/>
</dbReference>
<dbReference type="GO" id="GO:0097110">
    <property type="term" value="F:scaffold protein binding"/>
    <property type="evidence" value="ECO:0000266"/>
    <property type="project" value="RGD"/>
</dbReference>
<dbReference type="GO" id="GO:0061760">
    <property type="term" value="P:antifungal innate immune response"/>
    <property type="evidence" value="ECO:0000266"/>
    <property type="project" value="RGD"/>
</dbReference>
<dbReference type="GO" id="GO:0042113">
    <property type="term" value="P:B cell activation"/>
    <property type="evidence" value="ECO:0000266"/>
    <property type="project" value="RGD"/>
</dbReference>
<dbReference type="GO" id="GO:0030183">
    <property type="term" value="P:B cell differentiation"/>
    <property type="evidence" value="ECO:0000266"/>
    <property type="project" value="RGD"/>
</dbReference>
<dbReference type="GO" id="GO:0050853">
    <property type="term" value="P:B cell receptor signaling pathway"/>
    <property type="evidence" value="ECO:0000266"/>
    <property type="project" value="RGD"/>
</dbReference>
<dbReference type="GO" id="GO:0019722">
    <property type="term" value="P:calcium-mediated signaling"/>
    <property type="evidence" value="ECO:0000266"/>
    <property type="project" value="RGD"/>
</dbReference>
<dbReference type="GO" id="GO:0001775">
    <property type="term" value="P:cell activation"/>
    <property type="evidence" value="ECO:0000266"/>
    <property type="project" value="RGD"/>
</dbReference>
<dbReference type="GO" id="GO:0071277">
    <property type="term" value="P:cellular response to calcium ion"/>
    <property type="evidence" value="ECO:0000266"/>
    <property type="project" value="RGD"/>
</dbReference>
<dbReference type="GO" id="GO:1990858">
    <property type="term" value="P:cellular response to lectin"/>
    <property type="evidence" value="ECO:0000266"/>
    <property type="project" value="RGD"/>
</dbReference>
<dbReference type="GO" id="GO:0071396">
    <property type="term" value="P:cellular response to lipid"/>
    <property type="evidence" value="ECO:0000266"/>
    <property type="project" value="RGD"/>
</dbReference>
<dbReference type="GO" id="GO:0002316">
    <property type="term" value="P:follicular B cell differentiation"/>
    <property type="evidence" value="ECO:0000266"/>
    <property type="project" value="RGD"/>
</dbReference>
<dbReference type="GO" id="GO:0032959">
    <property type="term" value="P:inositol trisphosphate biosynthetic process"/>
    <property type="evidence" value="ECO:0000266"/>
    <property type="project" value="RGD"/>
</dbReference>
<dbReference type="GO" id="GO:0035556">
    <property type="term" value="P:intracellular signal transduction"/>
    <property type="evidence" value="ECO:0000315"/>
    <property type="project" value="ARUK-UCL"/>
</dbReference>
<dbReference type="GO" id="GO:0031663">
    <property type="term" value="P:lipopolysaccharide-mediated signaling pathway"/>
    <property type="evidence" value="ECO:0000266"/>
    <property type="project" value="RGD"/>
</dbReference>
<dbReference type="GO" id="GO:0002281">
    <property type="term" value="P:macrophage activation involved in immune response"/>
    <property type="evidence" value="ECO:0000266"/>
    <property type="project" value="RGD"/>
</dbReference>
<dbReference type="GO" id="GO:0043069">
    <property type="term" value="P:negative regulation of programmed cell death"/>
    <property type="evidence" value="ECO:0000266"/>
    <property type="project" value="RGD"/>
</dbReference>
<dbReference type="GO" id="GO:0006661">
    <property type="term" value="P:phosphatidylinositol biosynthetic process"/>
    <property type="evidence" value="ECO:0000250"/>
    <property type="project" value="UniProtKB"/>
</dbReference>
<dbReference type="GO" id="GO:0046488">
    <property type="term" value="P:phosphatidylinositol metabolic process"/>
    <property type="evidence" value="ECO:0000318"/>
    <property type="project" value="GO_Central"/>
</dbReference>
<dbReference type="GO" id="GO:0048015">
    <property type="term" value="P:phosphatidylinositol-mediated signaling"/>
    <property type="evidence" value="ECO:0000318"/>
    <property type="project" value="GO_Central"/>
</dbReference>
<dbReference type="GO" id="GO:0009395">
    <property type="term" value="P:phospholipid catabolic process"/>
    <property type="evidence" value="ECO:0007669"/>
    <property type="project" value="InterPro"/>
</dbReference>
<dbReference type="GO" id="GO:0050850">
    <property type="term" value="P:positive regulation of calcium-mediated signaling"/>
    <property type="evidence" value="ECO:0000266"/>
    <property type="project" value="RGD"/>
</dbReference>
<dbReference type="GO" id="GO:0043123">
    <property type="term" value="P:positive regulation of canonical NF-kappaB signal transduction"/>
    <property type="evidence" value="ECO:0000315"/>
    <property type="project" value="ARUK-UCL"/>
</dbReference>
<dbReference type="GO" id="GO:1902808">
    <property type="term" value="P:positive regulation of cell cycle G1/S phase transition"/>
    <property type="evidence" value="ECO:0000314"/>
    <property type="project" value="ARUK-UCL"/>
</dbReference>
<dbReference type="GO" id="GO:0007204">
    <property type="term" value="P:positive regulation of cytosolic calcium ion concentration"/>
    <property type="evidence" value="ECO:0000315"/>
    <property type="project" value="RGD"/>
</dbReference>
<dbReference type="GO" id="GO:0002732">
    <property type="term" value="P:positive regulation of dendritic cell cytokine production"/>
    <property type="evidence" value="ECO:0000266"/>
    <property type="project" value="RGD"/>
</dbReference>
<dbReference type="GO" id="GO:0010634">
    <property type="term" value="P:positive regulation of epithelial cell migration"/>
    <property type="evidence" value="ECO:0000318"/>
    <property type="project" value="GO_Central"/>
</dbReference>
<dbReference type="GO" id="GO:0010628">
    <property type="term" value="P:positive regulation of gene expression"/>
    <property type="evidence" value="ECO:0000315"/>
    <property type="project" value="ARUK-UCL"/>
</dbReference>
<dbReference type="GO" id="GO:0032733">
    <property type="term" value="P:positive regulation of interleukin-10 production"/>
    <property type="evidence" value="ECO:0000266"/>
    <property type="project" value="RGD"/>
</dbReference>
<dbReference type="GO" id="GO:0032735">
    <property type="term" value="P:positive regulation of interleukin-12 production"/>
    <property type="evidence" value="ECO:0000266"/>
    <property type="project" value="RGD"/>
</dbReference>
<dbReference type="GO" id="GO:0032743">
    <property type="term" value="P:positive regulation of interleukin-2 production"/>
    <property type="evidence" value="ECO:0000266"/>
    <property type="project" value="RGD"/>
</dbReference>
<dbReference type="GO" id="GO:0032747">
    <property type="term" value="P:positive regulation of interleukin-23 production"/>
    <property type="evidence" value="ECO:0000266"/>
    <property type="project" value="RGD"/>
</dbReference>
<dbReference type="GO" id="GO:0032755">
    <property type="term" value="P:positive regulation of interleukin-6 production"/>
    <property type="evidence" value="ECO:0000266"/>
    <property type="project" value="RGD"/>
</dbReference>
<dbReference type="GO" id="GO:1902533">
    <property type="term" value="P:positive regulation of intracellular signal transduction"/>
    <property type="evidence" value="ECO:0000315"/>
    <property type="project" value="ARUK-UCL"/>
</dbReference>
<dbReference type="GO" id="GO:0060907">
    <property type="term" value="P:positive regulation of macrophage cytokine production"/>
    <property type="evidence" value="ECO:0000266"/>
    <property type="project" value="RGD"/>
</dbReference>
<dbReference type="GO" id="GO:0043410">
    <property type="term" value="P:positive regulation of MAPK cascade"/>
    <property type="evidence" value="ECO:0000266"/>
    <property type="project" value="RGD"/>
</dbReference>
<dbReference type="GO" id="GO:0150078">
    <property type="term" value="P:positive regulation of neuroinflammatory response"/>
    <property type="evidence" value="ECO:0000266"/>
    <property type="project" value="RGD"/>
</dbReference>
<dbReference type="GO" id="GO:1900227">
    <property type="term" value="P:positive regulation of NLRP3 inflammasome complex assembly"/>
    <property type="evidence" value="ECO:0000266"/>
    <property type="project" value="RGD"/>
</dbReference>
<dbReference type="GO" id="GO:0060100">
    <property type="term" value="P:positive regulation of phagocytosis, engulfment"/>
    <property type="evidence" value="ECO:0000266"/>
    <property type="project" value="RGD"/>
</dbReference>
<dbReference type="GO" id="GO:1903428">
    <property type="term" value="P:positive regulation of reactive oxygen species biosynthetic process"/>
    <property type="evidence" value="ECO:0000266"/>
    <property type="project" value="RGD"/>
</dbReference>
<dbReference type="GO" id="GO:0002092">
    <property type="term" value="P:positive regulation of receptor internalization"/>
    <property type="evidence" value="ECO:0000266"/>
    <property type="project" value="RGD"/>
</dbReference>
<dbReference type="GO" id="GO:0032760">
    <property type="term" value="P:positive regulation of tumor necrosis factor production"/>
    <property type="evidence" value="ECO:0000266"/>
    <property type="project" value="RGD"/>
</dbReference>
<dbReference type="GO" id="GO:0032481">
    <property type="term" value="P:positive regulation of type I interferon production"/>
    <property type="evidence" value="ECO:0000266"/>
    <property type="project" value="RGD"/>
</dbReference>
<dbReference type="GO" id="GO:0012501">
    <property type="term" value="P:programmed cell death"/>
    <property type="evidence" value="ECO:0000266"/>
    <property type="project" value="RGD"/>
</dbReference>
<dbReference type="GO" id="GO:0070884">
    <property type="term" value="P:regulation of calcineurin-NFAT signaling cascade"/>
    <property type="evidence" value="ECO:0000266"/>
    <property type="project" value="RGD"/>
</dbReference>
<dbReference type="GO" id="GO:0043122">
    <property type="term" value="P:regulation of canonical NF-kappaB signal transduction"/>
    <property type="evidence" value="ECO:0000266"/>
    <property type="project" value="RGD"/>
</dbReference>
<dbReference type="GO" id="GO:0010468">
    <property type="term" value="P:regulation of gene expression"/>
    <property type="evidence" value="ECO:0000266"/>
    <property type="project" value="RGD"/>
</dbReference>
<dbReference type="GO" id="GO:0019216">
    <property type="term" value="P:regulation of lipid metabolic process"/>
    <property type="evidence" value="ECO:0000266"/>
    <property type="project" value="RGD"/>
</dbReference>
<dbReference type="GO" id="GO:0051209">
    <property type="term" value="P:release of sequestered calcium ion into cytosol"/>
    <property type="evidence" value="ECO:0000250"/>
    <property type="project" value="UniProtKB"/>
</dbReference>
<dbReference type="GO" id="GO:0033198">
    <property type="term" value="P:response to ATP"/>
    <property type="evidence" value="ECO:0000314"/>
    <property type="project" value="RGD"/>
</dbReference>
<dbReference type="GO" id="GO:0048678">
    <property type="term" value="P:response to axon injury"/>
    <property type="evidence" value="ECO:0000266"/>
    <property type="project" value="RGD"/>
</dbReference>
<dbReference type="GO" id="GO:0032496">
    <property type="term" value="P:response to lipopolysaccharide"/>
    <property type="evidence" value="ECO:0000266"/>
    <property type="project" value="RGD"/>
</dbReference>
<dbReference type="GO" id="GO:0032026">
    <property type="term" value="P:response to magnesium ion"/>
    <property type="evidence" value="ECO:0000314"/>
    <property type="project" value="RGD"/>
</dbReference>
<dbReference type="GO" id="GO:0001878">
    <property type="term" value="P:response to yeast"/>
    <property type="evidence" value="ECO:0000266"/>
    <property type="project" value="RGD"/>
</dbReference>
<dbReference type="GO" id="GO:0002223">
    <property type="term" value="P:stimulatory C-type lectin receptor signaling pathway"/>
    <property type="evidence" value="ECO:0000266"/>
    <property type="project" value="RGD"/>
</dbReference>
<dbReference type="GO" id="GO:0050852">
    <property type="term" value="P:T cell receptor signaling pathway"/>
    <property type="evidence" value="ECO:0000266"/>
    <property type="project" value="RGD"/>
</dbReference>
<dbReference type="GO" id="GO:0002224">
    <property type="term" value="P:toll-like receptor signaling pathway"/>
    <property type="evidence" value="ECO:0000266"/>
    <property type="project" value="RGD"/>
</dbReference>
<dbReference type="CDD" id="cd00275">
    <property type="entry name" value="C2_PLC_like"/>
    <property type="match status" value="1"/>
</dbReference>
<dbReference type="CDD" id="cd16215">
    <property type="entry name" value="EFh_PI-PLCgamma2"/>
    <property type="match status" value="1"/>
</dbReference>
<dbReference type="CDD" id="cd13362">
    <property type="entry name" value="PH_PLC_gamma"/>
    <property type="match status" value="1"/>
</dbReference>
<dbReference type="CDD" id="cd13234">
    <property type="entry name" value="PHsplit_PLC_gamma"/>
    <property type="match status" value="1"/>
</dbReference>
<dbReference type="CDD" id="cd08592">
    <property type="entry name" value="PI-PLCc_gamma"/>
    <property type="match status" value="1"/>
</dbReference>
<dbReference type="CDD" id="cd09932">
    <property type="entry name" value="SH2_C-SH2_PLC_gamma_like"/>
    <property type="match status" value="1"/>
</dbReference>
<dbReference type="CDD" id="cd10341">
    <property type="entry name" value="SH2_N-SH2_PLC_gamma_like"/>
    <property type="match status" value="1"/>
</dbReference>
<dbReference type="CDD" id="cd11969">
    <property type="entry name" value="SH3_PLCgamma2"/>
    <property type="match status" value="1"/>
</dbReference>
<dbReference type="FunFam" id="2.30.29.30:FF:000168">
    <property type="entry name" value="1-phosphatidylinositol 4,5-bisphosphate phosphodiesterase gamma"/>
    <property type="match status" value="1"/>
</dbReference>
<dbReference type="FunFam" id="2.30.30.40:FF:000119">
    <property type="entry name" value="1-phosphatidylinositol 4,5-bisphosphate phosphodiesterase gamma"/>
    <property type="match status" value="1"/>
</dbReference>
<dbReference type="FunFam" id="2.60.40.150:FF:000094">
    <property type="entry name" value="1-phosphatidylinositol 4,5-bisphosphate phosphodiesterase gamma"/>
    <property type="match status" value="1"/>
</dbReference>
<dbReference type="FunFam" id="3.20.20.190:FF:000012">
    <property type="entry name" value="1-phosphatidylinositol 4,5-bisphosphate phosphodiesterase gamma"/>
    <property type="match status" value="1"/>
</dbReference>
<dbReference type="FunFam" id="3.20.20.190:FF:000016">
    <property type="entry name" value="1-phosphatidylinositol 4,5-bisphosphate phosphodiesterase gamma"/>
    <property type="match status" value="1"/>
</dbReference>
<dbReference type="FunFam" id="3.30.505.10:FF:000009">
    <property type="entry name" value="1-phosphatidylinositol 4,5-bisphosphate phosphodiesterase gamma"/>
    <property type="match status" value="1"/>
</dbReference>
<dbReference type="FunFam" id="3.30.505.10:FF:000011">
    <property type="entry name" value="1-phosphatidylinositol 4,5-bisphosphate phosphodiesterase gamma"/>
    <property type="match status" value="1"/>
</dbReference>
<dbReference type="Gene3D" id="2.60.40.150">
    <property type="entry name" value="C2 domain"/>
    <property type="match status" value="1"/>
</dbReference>
<dbReference type="Gene3D" id="3.20.20.190">
    <property type="entry name" value="Phosphatidylinositol (PI) phosphodiesterase"/>
    <property type="match status" value="2"/>
</dbReference>
<dbReference type="Gene3D" id="2.30.29.30">
    <property type="entry name" value="Pleckstrin-homology domain (PH domain)/Phosphotyrosine-binding domain (PTB)"/>
    <property type="match status" value="1"/>
</dbReference>
<dbReference type="Gene3D" id="3.30.505.10">
    <property type="entry name" value="SH2 domain"/>
    <property type="match status" value="2"/>
</dbReference>
<dbReference type="Gene3D" id="2.30.30.40">
    <property type="entry name" value="SH3 Domains"/>
    <property type="match status" value="1"/>
</dbReference>
<dbReference type="InterPro" id="IPR000008">
    <property type="entry name" value="C2_dom"/>
</dbReference>
<dbReference type="InterPro" id="IPR035892">
    <property type="entry name" value="C2_domain_sf"/>
</dbReference>
<dbReference type="InterPro" id="IPR011992">
    <property type="entry name" value="EF-hand-dom_pair"/>
</dbReference>
<dbReference type="InterPro" id="IPR011993">
    <property type="entry name" value="PH-like_dom_sf"/>
</dbReference>
<dbReference type="InterPro" id="IPR001849">
    <property type="entry name" value="PH_domain"/>
</dbReference>
<dbReference type="InterPro" id="IPR001192">
    <property type="entry name" value="PI-PLC_fam"/>
</dbReference>
<dbReference type="InterPro" id="IPR016279">
    <property type="entry name" value="PLC-gamma"/>
</dbReference>
<dbReference type="InterPro" id="IPR035023">
    <property type="entry name" value="PLC-gamma_C-SH2"/>
</dbReference>
<dbReference type="InterPro" id="IPR035024">
    <property type="entry name" value="PLC-gamma_N-SH2"/>
</dbReference>
<dbReference type="InterPro" id="IPR017946">
    <property type="entry name" value="PLC-like_Pdiesterase_TIM-brl"/>
</dbReference>
<dbReference type="InterPro" id="IPR057061">
    <property type="entry name" value="PLCG_EF-hand_2"/>
</dbReference>
<dbReference type="InterPro" id="IPR035723">
    <property type="entry name" value="PLCgamma2_SH3"/>
</dbReference>
<dbReference type="InterPro" id="IPR000909">
    <property type="entry name" value="PLipase_C_PInositol-sp_X_dom"/>
</dbReference>
<dbReference type="InterPro" id="IPR001711">
    <property type="entry name" value="PLipase_C_Pinositol-sp_Y"/>
</dbReference>
<dbReference type="InterPro" id="IPR000980">
    <property type="entry name" value="SH2"/>
</dbReference>
<dbReference type="InterPro" id="IPR036860">
    <property type="entry name" value="SH2_dom_sf"/>
</dbReference>
<dbReference type="InterPro" id="IPR036028">
    <property type="entry name" value="SH3-like_dom_sf"/>
</dbReference>
<dbReference type="InterPro" id="IPR001452">
    <property type="entry name" value="SH3_domain"/>
</dbReference>
<dbReference type="PANTHER" id="PTHR10336:SF25">
    <property type="entry name" value="1-PHOSPHATIDYLINOSITOL 4,5-BISPHOSPHATE PHOSPHODIESTERASE GAMMA-2"/>
    <property type="match status" value="1"/>
</dbReference>
<dbReference type="PANTHER" id="PTHR10336">
    <property type="entry name" value="PHOSPHOINOSITIDE-SPECIFIC PHOSPHOLIPASE C FAMILY PROTEIN"/>
    <property type="match status" value="1"/>
</dbReference>
<dbReference type="Pfam" id="PF00168">
    <property type="entry name" value="C2"/>
    <property type="match status" value="1"/>
</dbReference>
<dbReference type="Pfam" id="PF23583">
    <property type="entry name" value="EF_HAND_2_PLCG"/>
    <property type="match status" value="1"/>
</dbReference>
<dbReference type="Pfam" id="PF00388">
    <property type="entry name" value="PI-PLC-X"/>
    <property type="match status" value="1"/>
</dbReference>
<dbReference type="Pfam" id="PF00387">
    <property type="entry name" value="PI-PLC-Y"/>
    <property type="match status" value="1"/>
</dbReference>
<dbReference type="Pfam" id="PF00017">
    <property type="entry name" value="SH2"/>
    <property type="match status" value="2"/>
</dbReference>
<dbReference type="Pfam" id="PF00018">
    <property type="entry name" value="SH3_1"/>
    <property type="match status" value="1"/>
</dbReference>
<dbReference type="PIRSF" id="PIRSF000952">
    <property type="entry name" value="PLC-gamma"/>
    <property type="match status" value="1"/>
</dbReference>
<dbReference type="PRINTS" id="PR00390">
    <property type="entry name" value="PHPHLIPASEC"/>
</dbReference>
<dbReference type="PRINTS" id="PR00401">
    <property type="entry name" value="SH2DOMAIN"/>
</dbReference>
<dbReference type="SMART" id="SM00239">
    <property type="entry name" value="C2"/>
    <property type="match status" value="1"/>
</dbReference>
<dbReference type="SMART" id="SM00233">
    <property type="entry name" value="PH"/>
    <property type="match status" value="2"/>
</dbReference>
<dbReference type="SMART" id="SM00148">
    <property type="entry name" value="PLCXc"/>
    <property type="match status" value="1"/>
</dbReference>
<dbReference type="SMART" id="SM00149">
    <property type="entry name" value="PLCYc"/>
    <property type="match status" value="1"/>
</dbReference>
<dbReference type="SMART" id="SM00252">
    <property type="entry name" value="SH2"/>
    <property type="match status" value="2"/>
</dbReference>
<dbReference type="SMART" id="SM00326">
    <property type="entry name" value="SH3"/>
    <property type="match status" value="1"/>
</dbReference>
<dbReference type="SUPFAM" id="SSF49562">
    <property type="entry name" value="C2 domain (Calcium/lipid-binding domain, CaLB)"/>
    <property type="match status" value="1"/>
</dbReference>
<dbReference type="SUPFAM" id="SSF47473">
    <property type="entry name" value="EF-hand"/>
    <property type="match status" value="1"/>
</dbReference>
<dbReference type="SUPFAM" id="SSF50729">
    <property type="entry name" value="PH domain-like"/>
    <property type="match status" value="1"/>
</dbReference>
<dbReference type="SUPFAM" id="SSF51695">
    <property type="entry name" value="PLC-like phosphodiesterases"/>
    <property type="match status" value="1"/>
</dbReference>
<dbReference type="SUPFAM" id="SSF55550">
    <property type="entry name" value="SH2 domain"/>
    <property type="match status" value="2"/>
</dbReference>
<dbReference type="SUPFAM" id="SSF50044">
    <property type="entry name" value="SH3-domain"/>
    <property type="match status" value="1"/>
</dbReference>
<dbReference type="PROSITE" id="PS50004">
    <property type="entry name" value="C2"/>
    <property type="match status" value="1"/>
</dbReference>
<dbReference type="PROSITE" id="PS50003">
    <property type="entry name" value="PH_DOMAIN"/>
    <property type="match status" value="1"/>
</dbReference>
<dbReference type="PROSITE" id="PS50007">
    <property type="entry name" value="PIPLC_X_DOMAIN"/>
    <property type="match status" value="1"/>
</dbReference>
<dbReference type="PROSITE" id="PS50008">
    <property type="entry name" value="PIPLC_Y_DOMAIN"/>
    <property type="match status" value="1"/>
</dbReference>
<dbReference type="PROSITE" id="PS50001">
    <property type="entry name" value="SH2"/>
    <property type="match status" value="2"/>
</dbReference>
<dbReference type="PROSITE" id="PS50002">
    <property type="entry name" value="SH3"/>
    <property type="match status" value="1"/>
</dbReference>
<reference key="1">
    <citation type="journal article" date="1989" name="J. Biol. Chem.">
        <title>A second type of rat phosphoinositide-specific phospholipase C containing a src-related sequence not essential for phosphoinositide-hydrolyzing activity.</title>
        <authorList>
            <person name="Emori Y."/>
            <person name="Homma Y."/>
            <person name="Sorimachi H."/>
            <person name="Kawasaki H."/>
            <person name="Nakanishi O."/>
            <person name="Suzuki K."/>
            <person name="Takenawa T."/>
        </authorList>
    </citation>
    <scope>NUCLEOTIDE SEQUENCE [MRNA]</scope>
    <source>
        <tissue>Muscle</tissue>
    </source>
</reference>
<reference key="2">
    <citation type="journal article" date="1999" name="Blood">
        <title>Identification of the SH2 domain binding protein of Bruton's tyrosine kinase as BLNK--functional significance of Btk-SH2 domain in B-cell antigen receptor-coupled calcium signaling.</title>
        <authorList>
            <person name="Hashimoto S."/>
            <person name="Iwamatsu A."/>
            <person name="Ishiai M."/>
            <person name="Okawa K."/>
            <person name="Yamadori T."/>
            <person name="Matsushita M."/>
            <person name="Baba Y."/>
            <person name="Kishimoto T."/>
            <person name="Kurosaki T."/>
            <person name="Tsukada S."/>
        </authorList>
    </citation>
    <scope>PHOSPHORYLATION AT TYR-1197</scope>
</reference>
<reference key="3">
    <citation type="submission" date="2008-04" db="PDB data bank">
        <title>Solution structure of the second SH2 domain from rat PLC gamma-2.</title>
        <authorList>
            <consortium name="RIKEN structural genomics initiative (RSGI)"/>
        </authorList>
    </citation>
    <scope>STRUCTURE BY NMR OF 633-744</scope>
</reference>
<name>PLCG2_RAT</name>
<proteinExistence type="evidence at protein level"/>
<organism>
    <name type="scientific">Rattus norvegicus</name>
    <name type="common">Rat</name>
    <dbReference type="NCBI Taxonomy" id="10116"/>
    <lineage>
        <taxon>Eukaryota</taxon>
        <taxon>Metazoa</taxon>
        <taxon>Chordata</taxon>
        <taxon>Craniata</taxon>
        <taxon>Vertebrata</taxon>
        <taxon>Euteleostomi</taxon>
        <taxon>Mammalia</taxon>
        <taxon>Eutheria</taxon>
        <taxon>Euarchontoglires</taxon>
        <taxon>Glires</taxon>
        <taxon>Rodentia</taxon>
        <taxon>Myomorpha</taxon>
        <taxon>Muroidea</taxon>
        <taxon>Muridae</taxon>
        <taxon>Murinae</taxon>
        <taxon>Rattus</taxon>
    </lineage>
</organism>
<comment type="function">
    <text evidence="1">The production of the second messenger molecules diacylglycerol (DAG) and inositol 1,4,5-trisphosphate (IP3) is mediated by activated phosphatidylinositol-specific phospholipase C enzymes. It is a crucial enzyme in transmembrane signaling.</text>
</comment>
<comment type="catalytic activity">
    <reaction evidence="1">
        <text>a 1,2-diacyl-sn-glycero-3-phospho-(1D-myo-inositol-4,5-bisphosphate) + H2O = 1D-myo-inositol 1,4,5-trisphosphate + a 1,2-diacyl-sn-glycerol + H(+)</text>
        <dbReference type="Rhea" id="RHEA:33179"/>
        <dbReference type="ChEBI" id="CHEBI:15377"/>
        <dbReference type="ChEBI" id="CHEBI:15378"/>
        <dbReference type="ChEBI" id="CHEBI:17815"/>
        <dbReference type="ChEBI" id="CHEBI:58456"/>
        <dbReference type="ChEBI" id="CHEBI:203600"/>
        <dbReference type="EC" id="3.1.4.11"/>
    </reaction>
    <physiologicalReaction direction="left-to-right" evidence="1">
        <dbReference type="Rhea" id="RHEA:33180"/>
    </physiologicalReaction>
</comment>
<comment type="cofactor">
    <cofactor>
        <name>Ca(2+)</name>
        <dbReference type="ChEBI" id="CHEBI:29108"/>
    </cofactor>
</comment>
<comment type="subunit">
    <text evidence="2">Part of a complex composed of EEIG1, TNFRSF11A/RANK, PLCG2, GAB2, TEC and BTK; complex formation increases in the presence of TNFSF11/RANKL (By similarity). Interacts (via SH2 domain) with CSF1R (tyrosine phosphorylated). Interacts constitutively with THEMIS2.</text>
</comment>
<comment type="subcellular location">
    <subcellularLocation>
        <location evidence="2">Membrane raft</location>
    </subcellularLocation>
</comment>
<comment type="PTM">
    <text evidence="1 2">Phosphorylated on tyrosine residues by CSF1R (By similarity). Phosphorylated on tyrosine residues by BTK and SYK; upon ligand-induced activation of a variety of growth factor receptors and immune system receptors. Phosphorylation leads to increased phospholipase activity (By similarity).</text>
</comment>
<accession>P24135</accession>
<gene>
    <name evidence="11" type="primary">Plcg2</name>
</gene>
<keyword id="KW-0002">3D-structure</keyword>
<keyword id="KW-0106">Calcium</keyword>
<keyword id="KW-0378">Hydrolase</keyword>
<keyword id="KW-0442">Lipid degradation</keyword>
<keyword id="KW-0443">Lipid metabolism</keyword>
<keyword id="KW-0472">Membrane</keyword>
<keyword id="KW-0597">Phosphoprotein</keyword>
<keyword id="KW-1185">Reference proteome</keyword>
<keyword id="KW-0677">Repeat</keyword>
<keyword id="KW-0727">SH2 domain</keyword>
<keyword id="KW-0728">SH3 domain</keyword>
<keyword id="KW-0807">Transducer</keyword>
<feature type="chain" id="PRO_0000088502" description="1-phosphatidylinositol 4,5-bisphosphate phosphodiesterase gamma-2">
    <location>
        <begin position="1"/>
        <end position="1265"/>
    </location>
</feature>
<feature type="domain" description="PH" evidence="4">
    <location>
        <begin position="20"/>
        <end position="131"/>
    </location>
</feature>
<feature type="domain" description="PI-PLC X-box" evidence="7">
    <location>
        <begin position="312"/>
        <end position="456"/>
    </location>
</feature>
<feature type="domain" description="SH2 1" evidence="5">
    <location>
        <begin position="532"/>
        <end position="635"/>
    </location>
</feature>
<feature type="domain" description="SH2 2" evidence="5">
    <location>
        <begin position="646"/>
        <end position="735"/>
    </location>
</feature>
<feature type="domain" description="SH3" evidence="6">
    <location>
        <begin position="769"/>
        <end position="829"/>
    </location>
</feature>
<feature type="domain" description="PI-PLC Y-box" evidence="8">
    <location>
        <begin position="930"/>
        <end position="1044"/>
    </location>
</feature>
<feature type="domain" description="C2" evidence="3">
    <location>
        <begin position="1038"/>
        <end position="1169"/>
    </location>
</feature>
<feature type="active site" evidence="7">
    <location>
        <position position="327"/>
    </location>
</feature>
<feature type="active site" evidence="7">
    <location>
        <position position="372"/>
    </location>
</feature>
<feature type="modified residue" description="Phosphotyrosine; by BTK" evidence="1">
    <location>
        <position position="753"/>
    </location>
</feature>
<feature type="modified residue" description="Phosphotyrosine; by BTK" evidence="1">
    <location>
        <position position="759"/>
    </location>
</feature>
<feature type="modified residue" description="Phosphotyrosine; by BTK" evidence="9">
    <location>
        <position position="1197"/>
    </location>
</feature>
<feature type="modified residue" description="Phosphotyrosine" evidence="1">
    <location>
        <position position="1217"/>
    </location>
</feature>
<feature type="modified residue" description="Phosphotyrosine" evidence="1">
    <location>
        <position position="1245"/>
    </location>
</feature>
<feature type="turn" evidence="12">
    <location>
        <begin position="641"/>
        <end position="643"/>
    </location>
</feature>
<feature type="strand" evidence="12">
    <location>
        <begin position="647"/>
        <end position="650"/>
    </location>
</feature>
<feature type="helix" evidence="12">
    <location>
        <begin position="653"/>
        <end position="662"/>
    </location>
</feature>
<feature type="strand" evidence="12">
    <location>
        <begin position="665"/>
        <end position="672"/>
    </location>
</feature>
<feature type="strand" evidence="12">
    <location>
        <begin position="680"/>
        <end position="686"/>
    </location>
</feature>
<feature type="strand" evidence="12">
    <location>
        <begin position="689"/>
        <end position="700"/>
    </location>
</feature>
<feature type="strand" evidence="12">
    <location>
        <begin position="702"/>
        <end position="707"/>
    </location>
</feature>
<feature type="strand" evidence="12">
    <location>
        <begin position="710"/>
        <end position="712"/>
    </location>
</feature>
<feature type="helix" evidence="12">
    <location>
        <begin position="713"/>
        <end position="720"/>
    </location>
</feature>
<feature type="strand" evidence="12">
    <location>
        <begin position="725"/>
        <end position="728"/>
    </location>
</feature>
<feature type="helix" evidence="12">
    <location>
        <begin position="737"/>
        <end position="742"/>
    </location>
</feature>
<sequence length="1265" mass="147735">MTTMVNVDTLPEYEKSQIKRALELGTVMTVFSARKSTPERRTVQMIMETRQVAWSKTADKIEGFLDIMEIKEIRPGKNSKDFERAKAVRHKADCCFTIFYGTQFVLSTLSLATDSKEDAVKWLSGLKILHQEAMNASTPTMIESWLRKQIYSVDQTRRNSISLRELKTILPLVNFKVSGIKFLKDKLVEIGAQKDELSFEQFHLFYKKLMFEQQKSILDEFKKDSSVFILGNTDRPDASAVYLQDFQRFLLHEQQELWAQDLNKVRERMTKFIDDTMRETAEPFLFVDEFLTYLFSRENSIWDEKYDAVDMQDMNNPLSHYWISSSHNTYLTGDQLRSESSTEAYIRCLRAGCRCIELDCWDGPDGKPIIYHGWTRTTKIKFDDVVQAIRDHAFVTSSFPVILSIEEHCSVEQQRHMAKVFKEVLGDLLLTKPTEASADQLPSPSQLREKIIIKHKKLGPRGDVDVNVEDKKDEHKTQGELYMWDSIDQKWTRHYCAIADAKLSFSDDIEQTVEEDPVQDTPPTELHFGEKWFHKKVESRTSAEKLLQEYCAETGAKDGTFLVRESETFPNDYTLSFWRSGRVQHCRIRSTMEGGVMKYYLTDNLTFNSIYALIQHYREAHLRCAEFELRLTDPVPNPNPHESKPWYYDRLSRGEAEDMLMRIPRDGAFLIRKREGTDSYAITFRARGKVKHCRINRDGRHFVLGTSAYFESLVELVSYYEKHALYRKMRLRYPVTPELLERYNMERDINSLYDVSRMYVDPSEINPSMPQRTVKALYDYKAKRSDELTFCRGALIHNVSKEPGGWWKGDYGTRIQQYFPSNYVEDISAGDAEEMEKQIIEDNPLGSLCRGILDLNTYNVVKAPQGKNQKAFVFILEPKKQGDPPVEFATDRVEELFEWFQSIREITWKIDTKENNMKYWERNQSIAIELSDLVVYCKPTSKTKDHLENPDFREIRSFVETKADSIVRQKPVDLLRYNQKGLTRVYPKGQRVDSSNYDPFRLWLCGSQMVALNFQTPDKYMQMNHALFSLNGRTGYVLQPESMRSEKYDPMPPESQRKILMTLTVKVLGARHLPKLGRSIACPFVEVEICGAEYDSNKFKTTVVNDNGLSPVWAPTQEKVTFEIYDPNLAFLRFLVYEEDMFSDPNFLAHATYPIKGIKSGFRSVPLKNGYSEDIELASLLVFCEMRPVLESEEELYSSCRQLRRRQEELNNQLFLYDTHQNLRGANRDALVKEFNVNENQLRLYQEKCNRRLREKRVSNSRFYS</sequence>